<protein>
    <recommendedName>
        <fullName>CDGSH iron-sulfur domain-containing protein 2 homolog</fullName>
    </recommendedName>
</protein>
<feature type="chain" id="PRO_0000392027" description="CDGSH iron-sulfur domain-containing protein 2 homolog">
    <location>
        <begin position="1"/>
        <end position="132"/>
    </location>
</feature>
<feature type="topological domain" description="Lumenal" evidence="3">
    <location>
        <begin position="1"/>
        <end position="35"/>
    </location>
</feature>
<feature type="transmembrane region" description="Helical" evidence="3">
    <location>
        <begin position="36"/>
        <end position="58"/>
    </location>
</feature>
<feature type="topological domain" description="Cytoplasmic" evidence="3">
    <location>
        <begin position="59"/>
        <end position="132"/>
    </location>
</feature>
<feature type="binding site" evidence="1">
    <location>
        <position position="98"/>
    </location>
    <ligand>
        <name>[2Fe-2S] cluster</name>
        <dbReference type="ChEBI" id="CHEBI:190135"/>
    </ligand>
</feature>
<feature type="binding site" evidence="1">
    <location>
        <position position="100"/>
    </location>
    <ligand>
        <name>[2Fe-2S] cluster</name>
        <dbReference type="ChEBI" id="CHEBI:190135"/>
    </ligand>
</feature>
<feature type="binding site" evidence="1">
    <location>
        <position position="109"/>
    </location>
    <ligand>
        <name>[2Fe-2S] cluster</name>
        <dbReference type="ChEBI" id="CHEBI:190135"/>
    </ligand>
</feature>
<feature type="binding site" evidence="1">
    <location>
        <position position="113"/>
    </location>
    <ligand>
        <name>[2Fe-2S] cluster</name>
        <dbReference type="ChEBI" id="CHEBI:190135"/>
    </ligand>
</feature>
<reference key="1">
    <citation type="journal article" date="2007" name="Nature">
        <title>Evolution of genes and genomes on the Drosophila phylogeny.</title>
        <authorList>
            <consortium name="Drosophila 12 genomes consortium"/>
        </authorList>
    </citation>
    <scope>NUCLEOTIDE SEQUENCE [LARGE SCALE GENOMIC DNA]</scope>
    <source>
        <strain>MSH-3 / Tucson 14011-0111.49</strain>
    </source>
</reference>
<evidence type="ECO:0000250" key="1"/>
<evidence type="ECO:0000250" key="2">
    <source>
        <dbReference type="UniProtKB" id="Q9VAM6"/>
    </source>
</evidence>
<evidence type="ECO:0000255" key="3"/>
<evidence type="ECO:0000305" key="4"/>
<name>CISD2_DROPE</name>
<gene>
    <name evidence="2" type="primary">Cisd2</name>
    <name type="ORF">GL13882</name>
</gene>
<keyword id="KW-0001">2Fe-2S</keyword>
<keyword id="KW-0256">Endoplasmic reticulum</keyword>
<keyword id="KW-0408">Iron</keyword>
<keyword id="KW-0411">Iron-sulfur</keyword>
<keyword id="KW-0472">Membrane</keyword>
<keyword id="KW-0479">Metal-binding</keyword>
<keyword id="KW-1185">Reference proteome</keyword>
<keyword id="KW-0812">Transmembrane</keyword>
<keyword id="KW-1133">Transmembrane helix</keyword>
<dbReference type="EMBL" id="CH479186">
    <property type="protein sequence ID" value="EDW39063.1"/>
    <property type="molecule type" value="Genomic_DNA"/>
</dbReference>
<dbReference type="SMR" id="B4GPI0"/>
<dbReference type="STRING" id="7234.B4GPI0"/>
<dbReference type="EnsemblMetazoa" id="FBtr0179497">
    <property type="protein sequence ID" value="FBpp0177989"/>
    <property type="gene ID" value="FBgn0151487"/>
</dbReference>
<dbReference type="EnsemblMetazoa" id="XM_002020215.2">
    <property type="protein sequence ID" value="XP_002020251.1"/>
    <property type="gene ID" value="LOC6594848"/>
</dbReference>
<dbReference type="GeneID" id="6594848"/>
<dbReference type="KEGG" id="dpe:6594848"/>
<dbReference type="CTD" id="493856"/>
<dbReference type="eggNOG" id="KOG3461">
    <property type="taxonomic scope" value="Eukaryota"/>
</dbReference>
<dbReference type="HOGENOM" id="CLU_132293_1_0_1"/>
<dbReference type="OMA" id="QIRKHEP"/>
<dbReference type="OrthoDB" id="449252at2759"/>
<dbReference type="PhylomeDB" id="B4GPI0"/>
<dbReference type="Proteomes" id="UP000008744">
    <property type="component" value="Unassembled WGS sequence"/>
</dbReference>
<dbReference type="GO" id="GO:0005789">
    <property type="term" value="C:endoplasmic reticulum membrane"/>
    <property type="evidence" value="ECO:0007669"/>
    <property type="project" value="UniProtKB-SubCell"/>
</dbReference>
<dbReference type="GO" id="GO:0005741">
    <property type="term" value="C:mitochondrial outer membrane"/>
    <property type="evidence" value="ECO:0007669"/>
    <property type="project" value="EnsemblMetazoa"/>
</dbReference>
<dbReference type="GO" id="GO:0051537">
    <property type="term" value="F:2 iron, 2 sulfur cluster binding"/>
    <property type="evidence" value="ECO:0007669"/>
    <property type="project" value="UniProtKB-KW"/>
</dbReference>
<dbReference type="GO" id="GO:0046872">
    <property type="term" value="F:metal ion binding"/>
    <property type="evidence" value="ECO:0007669"/>
    <property type="project" value="UniProtKB-KW"/>
</dbReference>
<dbReference type="GO" id="GO:0006879">
    <property type="term" value="P:intracellular iron ion homeostasis"/>
    <property type="evidence" value="ECO:0007669"/>
    <property type="project" value="EnsemblMetazoa"/>
</dbReference>
<dbReference type="GO" id="GO:0006839">
    <property type="term" value="P:mitochondrial transport"/>
    <property type="evidence" value="ECO:0007669"/>
    <property type="project" value="EnsemblMetazoa"/>
</dbReference>
<dbReference type="GO" id="GO:0010506">
    <property type="term" value="P:regulation of autophagy"/>
    <property type="evidence" value="ECO:0007669"/>
    <property type="project" value="InterPro"/>
</dbReference>
<dbReference type="Gene3D" id="3.40.5.90">
    <property type="entry name" value="CDGSH iron-sulfur domain, mitoNEET-type"/>
    <property type="match status" value="1"/>
</dbReference>
<dbReference type="InterPro" id="IPR045131">
    <property type="entry name" value="CISD1/2"/>
</dbReference>
<dbReference type="InterPro" id="IPR018967">
    <property type="entry name" value="FeS-contain_CDGSH-typ"/>
</dbReference>
<dbReference type="InterPro" id="IPR019610">
    <property type="entry name" value="FeS-contain_mitoNEET_N"/>
</dbReference>
<dbReference type="InterPro" id="IPR042216">
    <property type="entry name" value="MitoNEET_CISD"/>
</dbReference>
<dbReference type="PANTHER" id="PTHR13680">
    <property type="entry name" value="CDGSH IRON-SULFUR DOMAIN-CONTAINING PROTEIN 1"/>
    <property type="match status" value="1"/>
</dbReference>
<dbReference type="PANTHER" id="PTHR13680:SF5">
    <property type="entry name" value="CDGSH IRON-SULFUR DOMAIN-CONTAINING PROTEIN 1"/>
    <property type="match status" value="1"/>
</dbReference>
<dbReference type="Pfam" id="PF10660">
    <property type="entry name" value="MitoNEET_N"/>
    <property type="match status" value="1"/>
</dbReference>
<dbReference type="Pfam" id="PF09360">
    <property type="entry name" value="zf-CDGSH"/>
    <property type="match status" value="1"/>
</dbReference>
<dbReference type="SMART" id="SM00704">
    <property type="entry name" value="ZnF_CDGSH"/>
    <property type="match status" value="1"/>
</dbReference>
<proteinExistence type="inferred from homology"/>
<comment type="cofactor">
    <cofactor evidence="1">
        <name>[2Fe-2S] cluster</name>
        <dbReference type="ChEBI" id="CHEBI:190135"/>
    </cofactor>
    <text evidence="1">Binds 1 [2Fe-2S] cluster.</text>
</comment>
<comment type="subcellular location">
    <subcellularLocation>
        <location evidence="4">Endoplasmic reticulum membrane</location>
        <topology evidence="4">Single-pass membrane protein</topology>
    </subcellularLocation>
</comment>
<comment type="similarity">
    <text evidence="4">Belongs to the CISD protein family. CISD2 subfamily.</text>
</comment>
<sequence>MEPISHVVKSSLPNYLSSLPIPDSFGGWFKLSFKDWLALIPPTVVVAGLGYTTYLAFCPAARCAGKDSGRCNSSIRKNEAKVVTMVDVEDIAGQAAFCRCWKTKNWPYCDGSHGEHNKQTGDNVGPVVVKKK</sequence>
<organism>
    <name type="scientific">Drosophila persimilis</name>
    <name type="common">Fruit fly</name>
    <dbReference type="NCBI Taxonomy" id="7234"/>
    <lineage>
        <taxon>Eukaryota</taxon>
        <taxon>Metazoa</taxon>
        <taxon>Ecdysozoa</taxon>
        <taxon>Arthropoda</taxon>
        <taxon>Hexapoda</taxon>
        <taxon>Insecta</taxon>
        <taxon>Pterygota</taxon>
        <taxon>Neoptera</taxon>
        <taxon>Endopterygota</taxon>
        <taxon>Diptera</taxon>
        <taxon>Brachycera</taxon>
        <taxon>Muscomorpha</taxon>
        <taxon>Ephydroidea</taxon>
        <taxon>Drosophilidae</taxon>
        <taxon>Drosophila</taxon>
        <taxon>Sophophora</taxon>
    </lineage>
</organism>
<accession>B4GPI0</accession>